<accession>Q5JI92</accession>
<keyword id="KW-0413">Isomerase</keyword>
<keyword id="KW-1185">Reference proteome</keyword>
<keyword id="KW-0819">tRNA processing</keyword>
<protein>
    <recommendedName>
        <fullName evidence="1">tRNA pseudouridine synthase A</fullName>
        <ecNumber evidence="1">5.4.99.12</ecNumber>
    </recommendedName>
    <alternativeName>
        <fullName evidence="1">tRNA pseudouridine(38-40) synthase</fullName>
    </alternativeName>
    <alternativeName>
        <fullName evidence="1">tRNA pseudouridylate synthase I</fullName>
    </alternativeName>
    <alternativeName>
        <fullName evidence="1">tRNA-uridine isomerase I</fullName>
    </alternativeName>
</protein>
<comment type="function">
    <text evidence="1">Formation of pseudouridine at positions 38, 39 and 40 in the anticodon stem and loop of transfer RNAs.</text>
</comment>
<comment type="catalytic activity">
    <reaction evidence="1">
        <text>uridine(38/39/40) in tRNA = pseudouridine(38/39/40) in tRNA</text>
        <dbReference type="Rhea" id="RHEA:22376"/>
        <dbReference type="Rhea" id="RHEA-COMP:10085"/>
        <dbReference type="Rhea" id="RHEA-COMP:10087"/>
        <dbReference type="ChEBI" id="CHEBI:65314"/>
        <dbReference type="ChEBI" id="CHEBI:65315"/>
        <dbReference type="EC" id="5.4.99.12"/>
    </reaction>
</comment>
<comment type="similarity">
    <text evidence="1">Belongs to the tRNA pseudouridine synthase TruA family.</text>
</comment>
<dbReference type="EC" id="5.4.99.12" evidence="1"/>
<dbReference type="EMBL" id="AP006878">
    <property type="protein sequence ID" value="BAD85116.1"/>
    <property type="molecule type" value="Genomic_DNA"/>
</dbReference>
<dbReference type="RefSeq" id="WP_011249878.1">
    <property type="nucleotide sequence ID" value="NC_006624.1"/>
</dbReference>
<dbReference type="SMR" id="Q5JI92"/>
<dbReference type="FunCoup" id="Q5JI92">
    <property type="interactions" value="186"/>
</dbReference>
<dbReference type="STRING" id="69014.TK0927"/>
<dbReference type="EnsemblBacteria" id="BAD85116">
    <property type="protein sequence ID" value="BAD85116"/>
    <property type="gene ID" value="TK0927"/>
</dbReference>
<dbReference type="GeneID" id="78447440"/>
<dbReference type="KEGG" id="tko:TK0927"/>
<dbReference type="PATRIC" id="fig|69014.16.peg.905"/>
<dbReference type="eggNOG" id="arCOG04449">
    <property type="taxonomic scope" value="Archaea"/>
</dbReference>
<dbReference type="HOGENOM" id="CLU_014673_0_1_2"/>
<dbReference type="InParanoid" id="Q5JI92"/>
<dbReference type="OrthoDB" id="25720at2157"/>
<dbReference type="PhylomeDB" id="Q5JI92"/>
<dbReference type="Proteomes" id="UP000000536">
    <property type="component" value="Chromosome"/>
</dbReference>
<dbReference type="GO" id="GO:0009982">
    <property type="term" value="F:pseudouridine synthase activity"/>
    <property type="evidence" value="ECO:0000318"/>
    <property type="project" value="GO_Central"/>
</dbReference>
<dbReference type="GO" id="GO:0003723">
    <property type="term" value="F:RNA binding"/>
    <property type="evidence" value="ECO:0007669"/>
    <property type="project" value="InterPro"/>
</dbReference>
<dbReference type="GO" id="GO:0160147">
    <property type="term" value="F:tRNA pseudouridine(38-40) synthase activity"/>
    <property type="evidence" value="ECO:0007669"/>
    <property type="project" value="UniProtKB-EC"/>
</dbReference>
<dbReference type="GO" id="GO:0031119">
    <property type="term" value="P:tRNA pseudouridine synthesis"/>
    <property type="evidence" value="ECO:0000318"/>
    <property type="project" value="GO_Central"/>
</dbReference>
<dbReference type="CDD" id="cd02866">
    <property type="entry name" value="PseudoU_synth_TruA_Archea"/>
    <property type="match status" value="1"/>
</dbReference>
<dbReference type="FunFam" id="3.30.70.580:FF:000001">
    <property type="entry name" value="tRNA pseudouridine synthase A"/>
    <property type="match status" value="1"/>
</dbReference>
<dbReference type="Gene3D" id="3.30.70.660">
    <property type="entry name" value="Pseudouridine synthase I, catalytic domain, C-terminal subdomain"/>
    <property type="match status" value="1"/>
</dbReference>
<dbReference type="Gene3D" id="3.30.70.580">
    <property type="entry name" value="Pseudouridine synthase I, catalytic domain, N-terminal subdomain"/>
    <property type="match status" value="1"/>
</dbReference>
<dbReference type="HAMAP" id="MF_00171">
    <property type="entry name" value="TruA"/>
    <property type="match status" value="1"/>
</dbReference>
<dbReference type="InterPro" id="IPR020103">
    <property type="entry name" value="PsdUridine_synth_cat_dom_sf"/>
</dbReference>
<dbReference type="InterPro" id="IPR001406">
    <property type="entry name" value="PsdUridine_synth_TruA"/>
</dbReference>
<dbReference type="InterPro" id="IPR020097">
    <property type="entry name" value="PsdUridine_synth_TruA_a/b_dom"/>
</dbReference>
<dbReference type="InterPro" id="IPR020095">
    <property type="entry name" value="PsdUridine_synth_TruA_C"/>
</dbReference>
<dbReference type="InterPro" id="IPR020094">
    <property type="entry name" value="TruA/RsuA/RluB/E/F_N"/>
</dbReference>
<dbReference type="NCBIfam" id="TIGR00071">
    <property type="entry name" value="hisT_truA"/>
    <property type="match status" value="1"/>
</dbReference>
<dbReference type="PANTHER" id="PTHR11142">
    <property type="entry name" value="PSEUDOURIDYLATE SYNTHASE"/>
    <property type="match status" value="1"/>
</dbReference>
<dbReference type="PANTHER" id="PTHR11142:SF0">
    <property type="entry name" value="TRNA PSEUDOURIDINE SYNTHASE-LIKE 1"/>
    <property type="match status" value="1"/>
</dbReference>
<dbReference type="Pfam" id="PF01416">
    <property type="entry name" value="PseudoU_synth_1"/>
    <property type="match status" value="1"/>
</dbReference>
<dbReference type="PIRSF" id="PIRSF001430">
    <property type="entry name" value="tRNA_psdUrid_synth"/>
    <property type="match status" value="1"/>
</dbReference>
<dbReference type="SUPFAM" id="SSF55120">
    <property type="entry name" value="Pseudouridine synthase"/>
    <property type="match status" value="1"/>
</dbReference>
<organism>
    <name type="scientific">Thermococcus kodakarensis (strain ATCC BAA-918 / JCM 12380 / KOD1)</name>
    <name type="common">Pyrococcus kodakaraensis (strain KOD1)</name>
    <dbReference type="NCBI Taxonomy" id="69014"/>
    <lineage>
        <taxon>Archaea</taxon>
        <taxon>Methanobacteriati</taxon>
        <taxon>Methanobacteriota</taxon>
        <taxon>Thermococci</taxon>
        <taxon>Thermococcales</taxon>
        <taxon>Thermococcaceae</taxon>
        <taxon>Thermococcus</taxon>
    </lineage>
</organism>
<reference key="1">
    <citation type="journal article" date="2005" name="Genome Res.">
        <title>Complete genome sequence of the hyperthermophilic archaeon Thermococcus kodakaraensis KOD1 and comparison with Pyrococcus genomes.</title>
        <authorList>
            <person name="Fukui T."/>
            <person name="Atomi H."/>
            <person name="Kanai T."/>
            <person name="Matsumi R."/>
            <person name="Fujiwara S."/>
            <person name="Imanaka T."/>
        </authorList>
    </citation>
    <scope>NUCLEOTIDE SEQUENCE [LARGE SCALE GENOMIC DNA]</scope>
    <source>
        <strain>ATCC BAA-918 / JCM 12380 / KOD1</strain>
    </source>
</reference>
<sequence length="267" mass="30596">MKLALRVAYDGSAFYGFQRQPGVRTVEGEIIKVLQKLGIIESPEKNDFKGASRTDRGVSAFFNVVSFVPSERPDLARPEVLNHHLSDVWVLGIAEVPDDFHPRFWAKFKTYRYYLVNEGFDLSAMRECASLFVGRHDFSAFAKLEPGRDPIREVERVEVIERQGYLVIEVQGKSFLWEMVRRIVNALRFCGLGLLEAEEVERMLSGEYGKKIPPAPPEGLVLWHIEYPGIGFEGDEKGIKKARRDIFERYSRALTRAALFGDFLLEY</sequence>
<name>TRUA_THEKO</name>
<proteinExistence type="inferred from homology"/>
<gene>
    <name evidence="1" type="primary">truA</name>
    <name type="ordered locus">TK0927</name>
</gene>
<evidence type="ECO:0000255" key="1">
    <source>
        <dbReference type="HAMAP-Rule" id="MF_00171"/>
    </source>
</evidence>
<feature type="chain" id="PRO_0000057514" description="tRNA pseudouridine synthase A">
    <location>
        <begin position="1"/>
        <end position="267"/>
    </location>
</feature>
<feature type="active site" description="Nucleophile" evidence="1">
    <location>
        <position position="55"/>
    </location>
</feature>
<feature type="binding site" evidence="1">
    <location>
        <position position="111"/>
    </location>
    <ligand>
        <name>substrate</name>
    </ligand>
</feature>